<comment type="function">
    <text evidence="1">Catalyzes the reduction of hydroxylamine to form NH(3) and H(2)O.</text>
</comment>
<comment type="catalytic activity">
    <reaction evidence="1">
        <text>A + NH4(+) + H2O = hydroxylamine + AH2 + H(+)</text>
        <dbReference type="Rhea" id="RHEA:22052"/>
        <dbReference type="ChEBI" id="CHEBI:13193"/>
        <dbReference type="ChEBI" id="CHEBI:15377"/>
        <dbReference type="ChEBI" id="CHEBI:15378"/>
        <dbReference type="ChEBI" id="CHEBI:15429"/>
        <dbReference type="ChEBI" id="CHEBI:17499"/>
        <dbReference type="ChEBI" id="CHEBI:28938"/>
        <dbReference type="EC" id="1.7.99.1"/>
    </reaction>
</comment>
<comment type="cofactor">
    <cofactor evidence="1">
        <name>[4Fe-4S] cluster</name>
        <dbReference type="ChEBI" id="CHEBI:49883"/>
    </cofactor>
    <text evidence="1">Binds 1 [4Fe-4S] cluster.</text>
</comment>
<comment type="cofactor">
    <cofactor evidence="1">
        <name>hybrid [4Fe-2O-2S] cluster</name>
        <dbReference type="ChEBI" id="CHEBI:60519"/>
    </cofactor>
    <text evidence="1">Binds 1 hybrid [4Fe-2O-2S] cluster.</text>
</comment>
<comment type="subcellular location">
    <subcellularLocation>
        <location evidence="1">Cytoplasm</location>
    </subcellularLocation>
</comment>
<comment type="similarity">
    <text evidence="1">Belongs to the HCP family.</text>
</comment>
<accession>B7KLG3</accession>
<gene>
    <name evidence="1" type="primary">hcp</name>
    <name type="ordered locus">PCC7424_4165</name>
</gene>
<feature type="chain" id="PRO_1000192554" description="Hydroxylamine reductase">
    <location>
        <begin position="1"/>
        <end position="549"/>
    </location>
</feature>
<feature type="binding site" evidence="1">
    <location>
        <position position="3"/>
    </location>
    <ligand>
        <name>[4Fe-4S] cluster</name>
        <dbReference type="ChEBI" id="CHEBI:49883"/>
    </ligand>
</feature>
<feature type="binding site" evidence="1">
    <location>
        <position position="6"/>
    </location>
    <ligand>
        <name>[4Fe-4S] cluster</name>
        <dbReference type="ChEBI" id="CHEBI:49883"/>
    </ligand>
</feature>
<feature type="binding site" evidence="1">
    <location>
        <position position="15"/>
    </location>
    <ligand>
        <name>[4Fe-4S] cluster</name>
        <dbReference type="ChEBI" id="CHEBI:49883"/>
    </ligand>
</feature>
<feature type="binding site" evidence="1">
    <location>
        <position position="21"/>
    </location>
    <ligand>
        <name>[4Fe-4S] cluster</name>
        <dbReference type="ChEBI" id="CHEBI:49883"/>
    </ligand>
</feature>
<feature type="binding site" evidence="1">
    <location>
        <position position="244"/>
    </location>
    <ligand>
        <name>hybrid [4Fe-2O-2S] cluster</name>
        <dbReference type="ChEBI" id="CHEBI:60519"/>
    </ligand>
</feature>
<feature type="binding site" evidence="1">
    <location>
        <position position="268"/>
    </location>
    <ligand>
        <name>hybrid [4Fe-2O-2S] cluster</name>
        <dbReference type="ChEBI" id="CHEBI:60519"/>
    </ligand>
</feature>
<feature type="binding site" evidence="1">
    <location>
        <position position="313"/>
    </location>
    <ligand>
        <name>hybrid [4Fe-2O-2S] cluster</name>
        <dbReference type="ChEBI" id="CHEBI:60519"/>
    </ligand>
</feature>
<feature type="binding site" description="via persulfide group" evidence="1">
    <location>
        <position position="405"/>
    </location>
    <ligand>
        <name>hybrid [4Fe-2O-2S] cluster</name>
        <dbReference type="ChEBI" id="CHEBI:60519"/>
    </ligand>
</feature>
<feature type="binding site" evidence="1">
    <location>
        <position position="433"/>
    </location>
    <ligand>
        <name>hybrid [4Fe-2O-2S] cluster</name>
        <dbReference type="ChEBI" id="CHEBI:60519"/>
    </ligand>
</feature>
<feature type="binding site" evidence="1">
    <location>
        <position position="458"/>
    </location>
    <ligand>
        <name>hybrid [4Fe-2O-2S] cluster</name>
        <dbReference type="ChEBI" id="CHEBI:60519"/>
    </ligand>
</feature>
<feature type="binding site" evidence="1">
    <location>
        <position position="492"/>
    </location>
    <ligand>
        <name>hybrid [4Fe-2O-2S] cluster</name>
        <dbReference type="ChEBI" id="CHEBI:60519"/>
    </ligand>
</feature>
<feature type="binding site" evidence="1">
    <location>
        <position position="494"/>
    </location>
    <ligand>
        <name>hybrid [4Fe-2O-2S] cluster</name>
        <dbReference type="ChEBI" id="CHEBI:60519"/>
    </ligand>
</feature>
<feature type="modified residue" description="Cysteine persulfide" evidence="1">
    <location>
        <position position="405"/>
    </location>
</feature>
<name>HCP_GLOC7</name>
<reference key="1">
    <citation type="journal article" date="2011" name="MBio">
        <title>Novel metabolic attributes of the genus Cyanothece, comprising a group of unicellular nitrogen-fixing Cyanobacteria.</title>
        <authorList>
            <person name="Bandyopadhyay A."/>
            <person name="Elvitigala T."/>
            <person name="Welsh E."/>
            <person name="Stockel J."/>
            <person name="Liberton M."/>
            <person name="Min H."/>
            <person name="Sherman L.A."/>
            <person name="Pakrasi H.B."/>
        </authorList>
    </citation>
    <scope>NUCLEOTIDE SEQUENCE [LARGE SCALE GENOMIC DNA]</scope>
    <source>
        <strain>PCC 7424</strain>
    </source>
</reference>
<dbReference type="EC" id="1.7.99.1" evidence="1"/>
<dbReference type="EMBL" id="CP001291">
    <property type="protein sequence ID" value="ACK72535.1"/>
    <property type="molecule type" value="Genomic_DNA"/>
</dbReference>
<dbReference type="RefSeq" id="WP_015956120.1">
    <property type="nucleotide sequence ID" value="NC_011729.1"/>
</dbReference>
<dbReference type="SMR" id="B7KLG3"/>
<dbReference type="STRING" id="65393.PCC7424_4165"/>
<dbReference type="KEGG" id="cyc:PCC7424_4165"/>
<dbReference type="eggNOG" id="COG1151">
    <property type="taxonomic scope" value="Bacteria"/>
</dbReference>
<dbReference type="HOGENOM" id="CLU_038344_2_0_3"/>
<dbReference type="OrthoDB" id="9761526at2"/>
<dbReference type="Proteomes" id="UP000002384">
    <property type="component" value="Chromosome"/>
</dbReference>
<dbReference type="GO" id="GO:0005737">
    <property type="term" value="C:cytoplasm"/>
    <property type="evidence" value="ECO:0007669"/>
    <property type="project" value="UniProtKB-SubCell"/>
</dbReference>
<dbReference type="GO" id="GO:0051539">
    <property type="term" value="F:4 iron, 4 sulfur cluster binding"/>
    <property type="evidence" value="ECO:0007669"/>
    <property type="project" value="UniProtKB-KW"/>
</dbReference>
<dbReference type="GO" id="GO:0050418">
    <property type="term" value="F:hydroxylamine reductase activity"/>
    <property type="evidence" value="ECO:0007669"/>
    <property type="project" value="UniProtKB-UniRule"/>
</dbReference>
<dbReference type="GO" id="GO:0046872">
    <property type="term" value="F:metal ion binding"/>
    <property type="evidence" value="ECO:0007669"/>
    <property type="project" value="UniProtKB-KW"/>
</dbReference>
<dbReference type="GO" id="GO:0004601">
    <property type="term" value="F:peroxidase activity"/>
    <property type="evidence" value="ECO:0007669"/>
    <property type="project" value="TreeGrafter"/>
</dbReference>
<dbReference type="GO" id="GO:0042542">
    <property type="term" value="P:response to hydrogen peroxide"/>
    <property type="evidence" value="ECO:0007669"/>
    <property type="project" value="TreeGrafter"/>
</dbReference>
<dbReference type="CDD" id="cd01914">
    <property type="entry name" value="HCP"/>
    <property type="match status" value="1"/>
</dbReference>
<dbReference type="FunFam" id="1.20.1270.20:FF:000001">
    <property type="entry name" value="Hydroxylamine reductase"/>
    <property type="match status" value="1"/>
</dbReference>
<dbReference type="FunFam" id="3.40.50.2030:FF:000001">
    <property type="entry name" value="Hydroxylamine reductase"/>
    <property type="match status" value="1"/>
</dbReference>
<dbReference type="Gene3D" id="1.20.1270.20">
    <property type="match status" value="2"/>
</dbReference>
<dbReference type="Gene3D" id="3.40.50.2030">
    <property type="match status" value="2"/>
</dbReference>
<dbReference type="HAMAP" id="MF_00069">
    <property type="entry name" value="Hydroxylam_reduct"/>
    <property type="match status" value="1"/>
</dbReference>
<dbReference type="InterPro" id="IPR004137">
    <property type="entry name" value="HCP/CODH"/>
</dbReference>
<dbReference type="InterPro" id="IPR010048">
    <property type="entry name" value="Hydroxylam_reduct"/>
</dbReference>
<dbReference type="InterPro" id="IPR016099">
    <property type="entry name" value="Prismane-like_a/b-sand"/>
</dbReference>
<dbReference type="InterPro" id="IPR011254">
    <property type="entry name" value="Prismane-like_sf"/>
</dbReference>
<dbReference type="InterPro" id="IPR016100">
    <property type="entry name" value="Prismane_a-bundle"/>
</dbReference>
<dbReference type="NCBIfam" id="TIGR01703">
    <property type="entry name" value="hybrid_clust"/>
    <property type="match status" value="1"/>
</dbReference>
<dbReference type="NCBIfam" id="NF003658">
    <property type="entry name" value="PRK05290.1"/>
    <property type="match status" value="1"/>
</dbReference>
<dbReference type="PANTHER" id="PTHR30109">
    <property type="entry name" value="HYDROXYLAMINE REDUCTASE"/>
    <property type="match status" value="1"/>
</dbReference>
<dbReference type="PANTHER" id="PTHR30109:SF0">
    <property type="entry name" value="HYDROXYLAMINE REDUCTASE"/>
    <property type="match status" value="1"/>
</dbReference>
<dbReference type="Pfam" id="PF03063">
    <property type="entry name" value="Prismane"/>
    <property type="match status" value="1"/>
</dbReference>
<dbReference type="PIRSF" id="PIRSF000076">
    <property type="entry name" value="HCP"/>
    <property type="match status" value="1"/>
</dbReference>
<dbReference type="SUPFAM" id="SSF56821">
    <property type="entry name" value="Prismane protein-like"/>
    <property type="match status" value="1"/>
</dbReference>
<keyword id="KW-0004">4Fe-4S</keyword>
<keyword id="KW-0963">Cytoplasm</keyword>
<keyword id="KW-0408">Iron</keyword>
<keyword id="KW-0411">Iron-sulfur</keyword>
<keyword id="KW-0479">Metal-binding</keyword>
<keyword id="KW-0560">Oxidoreductase</keyword>
<keyword id="KW-1185">Reference proteome</keyword>
<proteinExistence type="inferred from homology"/>
<organism>
    <name type="scientific">Gloeothece citriformis (strain PCC 7424)</name>
    <name type="common">Cyanothece sp. (strain PCC 7424)</name>
    <dbReference type="NCBI Taxonomy" id="65393"/>
    <lineage>
        <taxon>Bacteria</taxon>
        <taxon>Bacillati</taxon>
        <taxon>Cyanobacteriota</taxon>
        <taxon>Cyanophyceae</taxon>
        <taxon>Oscillatoriophycideae</taxon>
        <taxon>Chroococcales</taxon>
        <taxon>Aphanothecaceae</taxon>
        <taxon>Gloeothece</taxon>
        <taxon>Gloeothece citriformis</taxon>
    </lineage>
</organism>
<evidence type="ECO:0000255" key="1">
    <source>
        <dbReference type="HAMAP-Rule" id="MF_00069"/>
    </source>
</evidence>
<sequence>MFCEQCEQTASGNGCHQWGACGKSPEVNAVQDLLIYCLRGLATVVLKARENHIPTQKMDVFICEALFATMTNVNFNNKSLTEYLKTCINLREKLKQTLEETLNTPPSWSDLSNYQPDWEDSLVTQGETLVHRFISRSSNDLDIISLKLTVLYGLKGVASYTFHAQELGQEDEKVYQFIEDALVKLERTDLSLQEWIDLALKVGEINLRAMELLDAGHTQTYGHPTPTQVPLNPKKGKAILVSGHDIRQLEAILQQTADKDITVYTHGELLPAHGYPKLKQNYPHLYGHYGTAWQNQTKDFAKFPGAIIITTNCLMPPHETYDEKLFTIGPVSYPHLTYLPPTETGIPDYSPAIKKACLMPGFTEETEPRHVMVGFARNTVLSVSDQVIEGVKTGKIRHFFLVGGCDGAKPGRTYYTELVEKVPSDCIVLTLACGKFRFFDKQLGEIEGLPRLMDVGQCNDAYSAIQIALGLANAFNVSVNEIPLSLILSWYEQKAIAVLLTLLYLGIQNIRLGPTLPAFITPNVLQFLQDNYHLQPITTPDEDLAACLN</sequence>
<protein>
    <recommendedName>
        <fullName evidence="1">Hydroxylamine reductase</fullName>
        <ecNumber evidence="1">1.7.99.1</ecNumber>
    </recommendedName>
    <alternativeName>
        <fullName evidence="1">Hybrid-cluster protein</fullName>
        <shortName evidence="1">HCP</shortName>
    </alternativeName>
    <alternativeName>
        <fullName evidence="1">Prismane protein</fullName>
    </alternativeName>
</protein>